<dbReference type="EC" id="2.1.3.2" evidence="1"/>
<dbReference type="EMBL" id="AJ416110">
    <property type="protein sequence ID" value="CAD01098.2"/>
    <property type="molecule type" value="Genomic_DNA"/>
</dbReference>
<dbReference type="SMR" id="Q934T0"/>
<dbReference type="UniPathway" id="UPA00070">
    <property type="reaction ID" value="UER00116"/>
</dbReference>
<dbReference type="GO" id="GO:0005829">
    <property type="term" value="C:cytosol"/>
    <property type="evidence" value="ECO:0007669"/>
    <property type="project" value="TreeGrafter"/>
</dbReference>
<dbReference type="GO" id="GO:0016597">
    <property type="term" value="F:amino acid binding"/>
    <property type="evidence" value="ECO:0007669"/>
    <property type="project" value="InterPro"/>
</dbReference>
<dbReference type="GO" id="GO:0004070">
    <property type="term" value="F:aspartate carbamoyltransferase activity"/>
    <property type="evidence" value="ECO:0007669"/>
    <property type="project" value="UniProtKB-UniRule"/>
</dbReference>
<dbReference type="GO" id="GO:0006207">
    <property type="term" value="P:'de novo' pyrimidine nucleobase biosynthetic process"/>
    <property type="evidence" value="ECO:0007669"/>
    <property type="project" value="InterPro"/>
</dbReference>
<dbReference type="GO" id="GO:0044205">
    <property type="term" value="P:'de novo' UMP biosynthetic process"/>
    <property type="evidence" value="ECO:0007669"/>
    <property type="project" value="UniProtKB-UniRule"/>
</dbReference>
<dbReference type="GO" id="GO:0006520">
    <property type="term" value="P:amino acid metabolic process"/>
    <property type="evidence" value="ECO:0007669"/>
    <property type="project" value="InterPro"/>
</dbReference>
<dbReference type="FunFam" id="3.40.50.1370:FF:000007">
    <property type="entry name" value="Aspartate carbamoyltransferase"/>
    <property type="match status" value="1"/>
</dbReference>
<dbReference type="Gene3D" id="3.40.50.1370">
    <property type="entry name" value="Aspartate/ornithine carbamoyltransferase"/>
    <property type="match status" value="2"/>
</dbReference>
<dbReference type="HAMAP" id="MF_00001">
    <property type="entry name" value="Asp_carb_tr"/>
    <property type="match status" value="1"/>
</dbReference>
<dbReference type="InterPro" id="IPR006132">
    <property type="entry name" value="Asp/Orn_carbamoyltranf_P-bd"/>
</dbReference>
<dbReference type="InterPro" id="IPR006130">
    <property type="entry name" value="Asp/Orn_carbamoylTrfase"/>
</dbReference>
<dbReference type="InterPro" id="IPR036901">
    <property type="entry name" value="Asp/Orn_carbamoylTrfase_sf"/>
</dbReference>
<dbReference type="InterPro" id="IPR002082">
    <property type="entry name" value="Asp_carbamoyltransf"/>
</dbReference>
<dbReference type="InterPro" id="IPR006131">
    <property type="entry name" value="Asp_carbamoyltransf_Asp/Orn-bd"/>
</dbReference>
<dbReference type="NCBIfam" id="TIGR00670">
    <property type="entry name" value="asp_carb_tr"/>
    <property type="match status" value="1"/>
</dbReference>
<dbReference type="NCBIfam" id="NF002032">
    <property type="entry name" value="PRK00856.1"/>
    <property type="match status" value="1"/>
</dbReference>
<dbReference type="PANTHER" id="PTHR45753:SF6">
    <property type="entry name" value="ASPARTATE CARBAMOYLTRANSFERASE"/>
    <property type="match status" value="1"/>
</dbReference>
<dbReference type="PANTHER" id="PTHR45753">
    <property type="entry name" value="ORNITHINE CARBAMOYLTRANSFERASE, MITOCHONDRIAL"/>
    <property type="match status" value="1"/>
</dbReference>
<dbReference type="Pfam" id="PF00185">
    <property type="entry name" value="OTCace"/>
    <property type="match status" value="1"/>
</dbReference>
<dbReference type="Pfam" id="PF02729">
    <property type="entry name" value="OTCace_N"/>
    <property type="match status" value="1"/>
</dbReference>
<dbReference type="PRINTS" id="PR00100">
    <property type="entry name" value="AOTCASE"/>
</dbReference>
<dbReference type="PRINTS" id="PR00101">
    <property type="entry name" value="ATCASE"/>
</dbReference>
<dbReference type="SUPFAM" id="SSF53671">
    <property type="entry name" value="Aspartate/ornithine carbamoyltransferase"/>
    <property type="match status" value="1"/>
</dbReference>
<dbReference type="PROSITE" id="PS00097">
    <property type="entry name" value="CARBAMOYLTRANSFERASE"/>
    <property type="match status" value="1"/>
</dbReference>
<proteinExistence type="evidence at protein level"/>
<organism>
    <name type="scientific">Psychrobacter sp. (strain TAD1)</name>
    <dbReference type="NCBI Taxonomy" id="81861"/>
    <lineage>
        <taxon>Bacteria</taxon>
        <taxon>Pseudomonadati</taxon>
        <taxon>Pseudomonadota</taxon>
        <taxon>Gammaproteobacteria</taxon>
        <taxon>Moraxellales</taxon>
        <taxon>Moraxellaceae</taxon>
        <taxon>Psychrobacter</taxon>
    </lineage>
</organism>
<gene>
    <name evidence="1" type="primary">pyrB</name>
</gene>
<feature type="chain" id="PRO_0000113181" description="Aspartate carbamoyltransferase catalytic subunit">
    <location>
        <begin position="1"/>
        <end position="332"/>
    </location>
</feature>
<feature type="region of interest" description="Disordered" evidence="2">
    <location>
        <begin position="1"/>
        <end position="20"/>
    </location>
</feature>
<feature type="binding site" evidence="1">
    <location>
        <position position="72"/>
    </location>
    <ligand>
        <name>carbamoyl phosphate</name>
        <dbReference type="ChEBI" id="CHEBI:58228"/>
    </ligand>
</feature>
<feature type="binding site" evidence="1">
    <location>
        <position position="73"/>
    </location>
    <ligand>
        <name>carbamoyl phosphate</name>
        <dbReference type="ChEBI" id="CHEBI:58228"/>
    </ligand>
</feature>
<feature type="binding site" evidence="1">
    <location>
        <position position="100"/>
    </location>
    <ligand>
        <name>L-aspartate</name>
        <dbReference type="ChEBI" id="CHEBI:29991"/>
    </ligand>
</feature>
<feature type="binding site" evidence="1">
    <location>
        <position position="122"/>
    </location>
    <ligand>
        <name>carbamoyl phosphate</name>
        <dbReference type="ChEBI" id="CHEBI:58228"/>
    </ligand>
</feature>
<feature type="binding site" evidence="1">
    <location>
        <position position="152"/>
    </location>
    <ligand>
        <name>carbamoyl phosphate</name>
        <dbReference type="ChEBI" id="CHEBI:58228"/>
    </ligand>
</feature>
<feature type="binding site" evidence="1">
    <location>
        <position position="155"/>
    </location>
    <ligand>
        <name>carbamoyl phosphate</name>
        <dbReference type="ChEBI" id="CHEBI:58228"/>
    </ligand>
</feature>
<feature type="binding site" evidence="1">
    <location>
        <position position="186"/>
    </location>
    <ligand>
        <name>L-aspartate</name>
        <dbReference type="ChEBI" id="CHEBI:29991"/>
    </ligand>
</feature>
<feature type="binding site" evidence="1">
    <location>
        <position position="241"/>
    </location>
    <ligand>
        <name>L-aspartate</name>
        <dbReference type="ChEBI" id="CHEBI:29991"/>
    </ligand>
</feature>
<feature type="binding site" evidence="1">
    <location>
        <position position="282"/>
    </location>
    <ligand>
        <name>carbamoyl phosphate</name>
        <dbReference type="ChEBI" id="CHEBI:58228"/>
    </ligand>
</feature>
<feature type="binding site" evidence="1">
    <location>
        <position position="283"/>
    </location>
    <ligand>
        <name>carbamoyl phosphate</name>
        <dbReference type="ChEBI" id="CHEBI:58228"/>
    </ligand>
</feature>
<keyword id="KW-0665">Pyrimidine biosynthesis</keyword>
<keyword id="KW-0808">Transferase</keyword>
<accession>Q934T0</accession>
<protein>
    <recommendedName>
        <fullName evidence="1">Aspartate carbamoyltransferase catalytic subunit</fullName>
        <ecNumber evidence="1">2.1.3.2</ecNumber>
    </recommendedName>
    <alternativeName>
        <fullName evidence="1">Aspartate transcarbamylase</fullName>
        <shortName evidence="1">ATCase</shortName>
    </alternativeName>
</protein>
<sequence>MPNTHDTKNNVSPSEYAKFDPSTIHQRLNTSLSRPQLNSDGSIRHFLGVEGLNKAQLQAIIAKALFFEPSTRTRTTFEVAEKRLGANVLNLDIASSSAKKGESLRDTLWNLQAMTADIFVVRHSASGAAHFMATEVTPDIAIINGGDGWHAHPTQGMLDMLTIHREAPRPFEELSVAIIGDVKHSRVARSDISALQTLGVKDIRVIAPRTLLPKGIERFGVQVYEDMNSCVRDCDVIMGLRIQNERIGSPLLASSSEYYKQYGITPERVALAKPDALIMHPGPMNRGVEIASSVADGPQSVILKQVSNGVAIRMAVLALTMEGQRAHQANRG</sequence>
<name>PYRB_PSYT1</name>
<reference key="1">
    <citation type="submission" date="2004-02" db="EMBL/GenBank/DDBJ databases">
        <authorList>
            <person name="Sun K."/>
            <person name="Hommais F."/>
            <person name="Bertin P."/>
            <person name="Pothier J."/>
            <person name="Di Prisco G."/>
            <person name="Danchin A."/>
            <person name="Herve G."/>
        </authorList>
    </citation>
    <scope>NUCLEOTIDE SEQUENCE [GENOMIC DNA]</scope>
</reference>
<reference key="2">
    <citation type="journal article" date="1998" name="FEMS Microbiol. Lett.">
        <title>Properties of aspartate transcarbamylase from TAD1, a psychrophilic bacterial strain isolated from Antarctica.</title>
        <authorList>
            <person name="Sun K."/>
            <person name="Camardella L."/>
            <person name="Di Prisco G."/>
            <person name="Herve G."/>
        </authorList>
    </citation>
    <scope>CHARACTERIZATION</scope>
</reference>
<comment type="function">
    <text evidence="1">Catalyzes the condensation of carbamoyl phosphate and aspartate to form carbamoyl aspartate and inorganic phosphate, the committed step in the de novo pyrimidine nucleotide biosynthesis pathway.</text>
</comment>
<comment type="catalytic activity">
    <reaction evidence="1">
        <text>carbamoyl phosphate + L-aspartate = N-carbamoyl-L-aspartate + phosphate + H(+)</text>
        <dbReference type="Rhea" id="RHEA:20013"/>
        <dbReference type="ChEBI" id="CHEBI:15378"/>
        <dbReference type="ChEBI" id="CHEBI:29991"/>
        <dbReference type="ChEBI" id="CHEBI:32814"/>
        <dbReference type="ChEBI" id="CHEBI:43474"/>
        <dbReference type="ChEBI" id="CHEBI:58228"/>
        <dbReference type="EC" id="2.1.3.2"/>
    </reaction>
</comment>
<comment type="pathway">
    <text evidence="1">Pyrimidine metabolism; UMP biosynthesis via de novo pathway; (S)-dihydroorotate from bicarbonate: step 2/3.</text>
</comment>
<comment type="subunit">
    <text evidence="1">Heterododecamer (2C3:3R2) of six catalytic PyrB chains organized as two trimers (C3), and six regulatory PyrI chains organized as three dimers (R2).</text>
</comment>
<comment type="similarity">
    <text evidence="1 3">Belongs to the aspartate/ornithine carbamoyltransferase superfamily. ATCase family.</text>
</comment>
<evidence type="ECO:0000255" key="1">
    <source>
        <dbReference type="HAMAP-Rule" id="MF_00001"/>
    </source>
</evidence>
<evidence type="ECO:0000256" key="2">
    <source>
        <dbReference type="SAM" id="MobiDB-lite"/>
    </source>
</evidence>
<evidence type="ECO:0000305" key="3"/>